<protein>
    <recommendedName>
        <fullName evidence="1">Ribonuclease PH</fullName>
        <shortName evidence="1">RNase PH</shortName>
        <ecNumber evidence="1">2.7.7.56</ecNumber>
    </recommendedName>
    <alternativeName>
        <fullName evidence="1">tRNA nucleotidyltransferase</fullName>
    </alternativeName>
</protein>
<keyword id="KW-0548">Nucleotidyltransferase</keyword>
<keyword id="KW-1185">Reference proteome</keyword>
<keyword id="KW-0694">RNA-binding</keyword>
<keyword id="KW-0698">rRNA processing</keyword>
<keyword id="KW-0808">Transferase</keyword>
<keyword id="KW-0819">tRNA processing</keyword>
<keyword id="KW-0820">tRNA-binding</keyword>
<sequence length="261" mass="28495">MNRIDGREFNELRPIKITRNFNKFAEGSVLIEMGNTKVICTASIEDKVPPFQKGTGKGWITSEYGMLPRATETRNPREVTKGRPSGRTMEIQRLIGRSLRSVVDLDVLGEKTIWIDCDVIQADGGTRTASITGSFIALADALNKLVEKGDIPKIPLKGFVAAVSVGIVEGNELLDLSFQEDSNALVDMNVVMTDKGEIVEIQGTGEGGPFTKQNLTDLLSLAEYGIEQIIKIQKEVLSDIVDKIGVDSVENNNSNPQSSQN</sequence>
<accession>B0KBM5</accession>
<organism>
    <name type="scientific">Thermoanaerobacter pseudethanolicus (strain ATCC 33223 / 39E)</name>
    <name type="common">Clostridium thermohydrosulfuricum</name>
    <dbReference type="NCBI Taxonomy" id="340099"/>
    <lineage>
        <taxon>Bacteria</taxon>
        <taxon>Bacillati</taxon>
        <taxon>Bacillota</taxon>
        <taxon>Clostridia</taxon>
        <taxon>Thermoanaerobacterales</taxon>
        <taxon>Thermoanaerobacteraceae</taxon>
        <taxon>Thermoanaerobacter</taxon>
    </lineage>
</organism>
<feature type="chain" id="PRO_1000129382" description="Ribonuclease PH">
    <location>
        <begin position="1"/>
        <end position="261"/>
    </location>
</feature>
<feature type="binding site" evidence="1">
    <location>
        <position position="87"/>
    </location>
    <ligand>
        <name>phosphate</name>
        <dbReference type="ChEBI" id="CHEBI:43474"/>
        <note>substrate</note>
    </ligand>
</feature>
<feature type="binding site" evidence="1">
    <location>
        <begin position="125"/>
        <end position="127"/>
    </location>
    <ligand>
        <name>phosphate</name>
        <dbReference type="ChEBI" id="CHEBI:43474"/>
        <note>substrate</note>
    </ligand>
</feature>
<proteinExistence type="inferred from homology"/>
<comment type="function">
    <text evidence="1">Phosphorolytic 3'-5' exoribonuclease that plays an important role in tRNA 3'-end maturation. Removes nucleotide residues following the 3'-CCA terminus of tRNAs; can also add nucleotides to the ends of RNA molecules by using nucleoside diphosphates as substrates, but this may not be physiologically important. Probably plays a role in initiation of 16S rRNA degradation (leading to ribosome degradation) during starvation.</text>
</comment>
<comment type="catalytic activity">
    <reaction evidence="1">
        <text>tRNA(n+1) + phosphate = tRNA(n) + a ribonucleoside 5'-diphosphate</text>
        <dbReference type="Rhea" id="RHEA:10628"/>
        <dbReference type="Rhea" id="RHEA-COMP:17343"/>
        <dbReference type="Rhea" id="RHEA-COMP:17344"/>
        <dbReference type="ChEBI" id="CHEBI:43474"/>
        <dbReference type="ChEBI" id="CHEBI:57930"/>
        <dbReference type="ChEBI" id="CHEBI:173114"/>
        <dbReference type="EC" id="2.7.7.56"/>
    </reaction>
</comment>
<comment type="subunit">
    <text evidence="1">Homohexameric ring arranged as a trimer of dimers.</text>
</comment>
<comment type="similarity">
    <text evidence="1">Belongs to the RNase PH family.</text>
</comment>
<gene>
    <name evidence="1" type="primary">rph</name>
    <name type="ordered locus">Teth39_1683</name>
</gene>
<reference key="1">
    <citation type="submission" date="2008-01" db="EMBL/GenBank/DDBJ databases">
        <title>Complete sequence of Thermoanaerobacter pseudethanolicus 39E.</title>
        <authorList>
            <person name="Copeland A."/>
            <person name="Lucas S."/>
            <person name="Lapidus A."/>
            <person name="Barry K."/>
            <person name="Glavina del Rio T."/>
            <person name="Dalin E."/>
            <person name="Tice H."/>
            <person name="Pitluck S."/>
            <person name="Bruce D."/>
            <person name="Goodwin L."/>
            <person name="Saunders E."/>
            <person name="Brettin T."/>
            <person name="Detter J.C."/>
            <person name="Han C."/>
            <person name="Schmutz J."/>
            <person name="Larimer F."/>
            <person name="Land M."/>
            <person name="Hauser L."/>
            <person name="Kyrpides N."/>
            <person name="Lykidis A."/>
            <person name="Hemme C."/>
            <person name="Fields M.W."/>
            <person name="He Z."/>
            <person name="Zhou J."/>
            <person name="Richardson P."/>
        </authorList>
    </citation>
    <scope>NUCLEOTIDE SEQUENCE [LARGE SCALE GENOMIC DNA]</scope>
    <source>
        <strain>ATCC 33223 / DSM 2355 / 39E</strain>
    </source>
</reference>
<evidence type="ECO:0000255" key="1">
    <source>
        <dbReference type="HAMAP-Rule" id="MF_00564"/>
    </source>
</evidence>
<dbReference type="EC" id="2.7.7.56" evidence="1"/>
<dbReference type="EMBL" id="CP000924">
    <property type="protein sequence ID" value="ABY95320.1"/>
    <property type="molecule type" value="Genomic_DNA"/>
</dbReference>
<dbReference type="RefSeq" id="WP_003870475.1">
    <property type="nucleotide sequence ID" value="NC_010321.1"/>
</dbReference>
<dbReference type="SMR" id="B0KBM5"/>
<dbReference type="STRING" id="340099.Teth39_1683"/>
<dbReference type="KEGG" id="tpd:Teth39_1683"/>
<dbReference type="eggNOG" id="COG0689">
    <property type="taxonomic scope" value="Bacteria"/>
</dbReference>
<dbReference type="HOGENOM" id="CLU_050858_0_0_9"/>
<dbReference type="Proteomes" id="UP000002156">
    <property type="component" value="Chromosome"/>
</dbReference>
<dbReference type="GO" id="GO:0000175">
    <property type="term" value="F:3'-5'-RNA exonuclease activity"/>
    <property type="evidence" value="ECO:0007669"/>
    <property type="project" value="UniProtKB-UniRule"/>
</dbReference>
<dbReference type="GO" id="GO:0000049">
    <property type="term" value="F:tRNA binding"/>
    <property type="evidence" value="ECO:0007669"/>
    <property type="project" value="UniProtKB-UniRule"/>
</dbReference>
<dbReference type="GO" id="GO:0009022">
    <property type="term" value="F:tRNA nucleotidyltransferase activity"/>
    <property type="evidence" value="ECO:0007669"/>
    <property type="project" value="UniProtKB-UniRule"/>
</dbReference>
<dbReference type="GO" id="GO:0016075">
    <property type="term" value="P:rRNA catabolic process"/>
    <property type="evidence" value="ECO:0007669"/>
    <property type="project" value="UniProtKB-UniRule"/>
</dbReference>
<dbReference type="GO" id="GO:0006364">
    <property type="term" value="P:rRNA processing"/>
    <property type="evidence" value="ECO:0007669"/>
    <property type="project" value="UniProtKB-KW"/>
</dbReference>
<dbReference type="GO" id="GO:0008033">
    <property type="term" value="P:tRNA processing"/>
    <property type="evidence" value="ECO:0007669"/>
    <property type="project" value="UniProtKB-UniRule"/>
</dbReference>
<dbReference type="CDD" id="cd11362">
    <property type="entry name" value="RNase_PH_bact"/>
    <property type="match status" value="1"/>
</dbReference>
<dbReference type="FunFam" id="3.30.230.70:FF:000003">
    <property type="entry name" value="Ribonuclease PH"/>
    <property type="match status" value="1"/>
</dbReference>
<dbReference type="Gene3D" id="3.30.230.70">
    <property type="entry name" value="GHMP Kinase, N-terminal domain"/>
    <property type="match status" value="1"/>
</dbReference>
<dbReference type="HAMAP" id="MF_00564">
    <property type="entry name" value="RNase_PH"/>
    <property type="match status" value="1"/>
</dbReference>
<dbReference type="InterPro" id="IPR001247">
    <property type="entry name" value="ExoRNase_PH_dom1"/>
</dbReference>
<dbReference type="InterPro" id="IPR015847">
    <property type="entry name" value="ExoRNase_PH_dom2"/>
</dbReference>
<dbReference type="InterPro" id="IPR036345">
    <property type="entry name" value="ExoRNase_PH_dom2_sf"/>
</dbReference>
<dbReference type="InterPro" id="IPR027408">
    <property type="entry name" value="PNPase/RNase_PH_dom_sf"/>
</dbReference>
<dbReference type="InterPro" id="IPR020568">
    <property type="entry name" value="Ribosomal_Su5_D2-typ_SF"/>
</dbReference>
<dbReference type="InterPro" id="IPR050080">
    <property type="entry name" value="RNase_PH"/>
</dbReference>
<dbReference type="InterPro" id="IPR002381">
    <property type="entry name" value="RNase_PH_bac-type"/>
</dbReference>
<dbReference type="InterPro" id="IPR018336">
    <property type="entry name" value="RNase_PH_CS"/>
</dbReference>
<dbReference type="NCBIfam" id="TIGR01966">
    <property type="entry name" value="RNasePH"/>
    <property type="match status" value="1"/>
</dbReference>
<dbReference type="PANTHER" id="PTHR11953">
    <property type="entry name" value="EXOSOME COMPLEX COMPONENT"/>
    <property type="match status" value="1"/>
</dbReference>
<dbReference type="PANTHER" id="PTHR11953:SF0">
    <property type="entry name" value="EXOSOME COMPLEX COMPONENT RRP41"/>
    <property type="match status" value="1"/>
</dbReference>
<dbReference type="Pfam" id="PF01138">
    <property type="entry name" value="RNase_PH"/>
    <property type="match status" value="1"/>
</dbReference>
<dbReference type="Pfam" id="PF03725">
    <property type="entry name" value="RNase_PH_C"/>
    <property type="match status" value="1"/>
</dbReference>
<dbReference type="SUPFAM" id="SSF55666">
    <property type="entry name" value="Ribonuclease PH domain 2-like"/>
    <property type="match status" value="1"/>
</dbReference>
<dbReference type="SUPFAM" id="SSF54211">
    <property type="entry name" value="Ribosomal protein S5 domain 2-like"/>
    <property type="match status" value="1"/>
</dbReference>
<dbReference type="PROSITE" id="PS01277">
    <property type="entry name" value="RIBONUCLEASE_PH"/>
    <property type="match status" value="1"/>
</dbReference>
<name>RNPH_THEP3</name>